<dbReference type="EMBL" id="AB046804">
    <property type="protein sequence ID" value="BAB13410.1"/>
    <property type="status" value="ALT_INIT"/>
    <property type="molecule type" value="mRNA"/>
</dbReference>
<dbReference type="EMBL" id="AK000093">
    <property type="protein sequence ID" value="BAA90940.1"/>
    <property type="molecule type" value="mRNA"/>
</dbReference>
<dbReference type="EMBL" id="AL136634">
    <property type="protein sequence ID" value="CAB66569.1"/>
    <property type="molecule type" value="mRNA"/>
</dbReference>
<dbReference type="EMBL" id="BX640637">
    <property type="protein sequence ID" value="CAE45785.1"/>
    <property type="molecule type" value="mRNA"/>
</dbReference>
<dbReference type="EMBL" id="BX640707">
    <property type="protein sequence ID" value="CAE45827.1"/>
    <property type="molecule type" value="mRNA"/>
</dbReference>
<dbReference type="EMBL" id="BX641000">
    <property type="protein sequence ID" value="CAE46003.1"/>
    <property type="status" value="ALT_INIT"/>
    <property type="molecule type" value="mRNA"/>
</dbReference>
<dbReference type="EMBL" id="AC010999">
    <property type="status" value="NOT_ANNOTATED_CDS"/>
    <property type="molecule type" value="Genomic_DNA"/>
</dbReference>
<dbReference type="EMBL" id="AC090517">
    <property type="status" value="NOT_ANNOTATED_CDS"/>
    <property type="molecule type" value="Genomic_DNA"/>
</dbReference>
<dbReference type="EMBL" id="AC090518">
    <property type="status" value="NOT_ANNOTATED_CDS"/>
    <property type="molecule type" value="Genomic_DNA"/>
</dbReference>
<dbReference type="EMBL" id="BC015382">
    <property type="protein sequence ID" value="AAH15382.2"/>
    <property type="molecule type" value="mRNA"/>
</dbReference>
<dbReference type="EMBL" id="BC053649">
    <property type="protein sequence ID" value="AAH53649.2"/>
    <property type="molecule type" value="mRNA"/>
</dbReference>
<dbReference type="EMBL" id="BC064359">
    <property type="protein sequence ID" value="AAH64359.1"/>
    <property type="molecule type" value="mRNA"/>
</dbReference>
<dbReference type="EMBL" id="BC130451">
    <property type="protein sequence ID" value="AAI30452.1"/>
    <property type="molecule type" value="mRNA"/>
</dbReference>
<dbReference type="EMBL" id="BC136412">
    <property type="protein sequence ID" value="AAI36413.1"/>
    <property type="molecule type" value="mRNA"/>
</dbReference>
<dbReference type="CCDS" id="CCDS32245.1">
    <molecule id="Q6N043-1"/>
</dbReference>
<dbReference type="CCDS" id="CCDS42041.1">
    <molecule id="Q6N043-2"/>
</dbReference>
<dbReference type="CCDS" id="CCDS58364.1">
    <molecule id="Q6N043-6"/>
</dbReference>
<dbReference type="RefSeq" id="NP_001002843.1">
    <molecule id="Q6N043-2"/>
    <property type="nucleotide sequence ID" value="NM_001002843.3"/>
</dbReference>
<dbReference type="RefSeq" id="NP_001002844.1">
    <molecule id="Q6N043-6"/>
    <property type="nucleotide sequence ID" value="NM_001002844.3"/>
</dbReference>
<dbReference type="RefSeq" id="NP_001275517.1">
    <molecule id="Q6N043-1"/>
    <property type="nucleotide sequence ID" value="NM_001288588.2"/>
</dbReference>
<dbReference type="RefSeq" id="NP_001275518.1">
    <molecule id="Q6N043-6"/>
    <property type="nucleotide sequence ID" value="NM_001288589.2"/>
</dbReference>
<dbReference type="RefSeq" id="NP_060131.2">
    <molecule id="Q6N043-1"/>
    <property type="nucleotide sequence ID" value="NM_017661.3"/>
</dbReference>
<dbReference type="RefSeq" id="XP_011520004.1">
    <property type="nucleotide sequence ID" value="XM_011521702.1"/>
</dbReference>
<dbReference type="RefSeq" id="XP_016877833.1">
    <property type="nucleotide sequence ID" value="XM_017022344.1"/>
</dbReference>
<dbReference type="RefSeq" id="XP_016877834.1">
    <property type="nucleotide sequence ID" value="XM_017022345.1"/>
</dbReference>
<dbReference type="BioGRID" id="120173">
    <property type="interactions" value="23"/>
</dbReference>
<dbReference type="FunCoup" id="Q6N043">
    <property type="interactions" value="2623"/>
</dbReference>
<dbReference type="IntAct" id="Q6N043">
    <property type="interactions" value="4"/>
</dbReference>
<dbReference type="MINT" id="Q6N043"/>
<dbReference type="STRING" id="9606.ENSP00000267807"/>
<dbReference type="ChEMBL" id="CHEMBL5465321"/>
<dbReference type="GlyGen" id="Q6N043">
    <property type="glycosylation" value="5 sites, 1 N-linked glycan (1 site), 1 O-linked glycan (2 sites)"/>
</dbReference>
<dbReference type="iPTMnet" id="Q6N043"/>
<dbReference type="PhosphoSitePlus" id="Q6N043"/>
<dbReference type="SwissPalm" id="Q6N043"/>
<dbReference type="BioMuta" id="ZNF280D"/>
<dbReference type="DMDM" id="223634726"/>
<dbReference type="jPOST" id="Q6N043"/>
<dbReference type="MassIVE" id="Q6N043"/>
<dbReference type="PaxDb" id="9606-ENSP00000267807"/>
<dbReference type="PeptideAtlas" id="Q6N043"/>
<dbReference type="ProteomicsDB" id="66603">
    <molecule id="Q6N043-1"/>
</dbReference>
<dbReference type="ProteomicsDB" id="66604">
    <molecule id="Q6N043-2"/>
</dbReference>
<dbReference type="ProteomicsDB" id="66605">
    <molecule id="Q6N043-3"/>
</dbReference>
<dbReference type="ProteomicsDB" id="66606">
    <molecule id="Q6N043-4"/>
</dbReference>
<dbReference type="ProteomicsDB" id="66607">
    <molecule id="Q6N043-5"/>
</dbReference>
<dbReference type="ProteomicsDB" id="69425"/>
<dbReference type="Pumba" id="Q6N043"/>
<dbReference type="Antibodypedia" id="25170">
    <property type="antibodies" value="72 antibodies from 20 providers"/>
</dbReference>
<dbReference type="DNASU" id="54816"/>
<dbReference type="Ensembl" id="ENST00000267807.12">
    <molecule id="Q6N043-1"/>
    <property type="protein sequence ID" value="ENSP00000267807.7"/>
    <property type="gene ID" value="ENSG00000137871.21"/>
</dbReference>
<dbReference type="Ensembl" id="ENST00000558067.5">
    <molecule id="Q6N043-4"/>
    <property type="protein sequence ID" value="ENSP00000454173.1"/>
    <property type="gene ID" value="ENSG00000137871.21"/>
</dbReference>
<dbReference type="Ensembl" id="ENST00000558320.5">
    <molecule id="Q6N043-6"/>
    <property type="protein sequence ID" value="ENSP00000453706.1"/>
    <property type="gene ID" value="ENSG00000137871.21"/>
</dbReference>
<dbReference type="Ensembl" id="ENST00000559237.5">
    <molecule id="Q6N043-2"/>
    <property type="protein sequence ID" value="ENSP00000454111.1"/>
    <property type="gene ID" value="ENSG00000137871.21"/>
</dbReference>
<dbReference type="Ensembl" id="ENST00000560002.5">
    <molecule id="Q6N043-3"/>
    <property type="protein sequence ID" value="ENSP00000453636.1"/>
    <property type="gene ID" value="ENSG00000137871.21"/>
</dbReference>
<dbReference type="GeneID" id="54816"/>
<dbReference type="KEGG" id="hsa:54816"/>
<dbReference type="MANE-Select" id="ENST00000267807.12">
    <property type="protein sequence ID" value="ENSP00000267807.7"/>
    <property type="RefSeq nucleotide sequence ID" value="NM_017661.4"/>
    <property type="RefSeq protein sequence ID" value="NP_060131.2"/>
</dbReference>
<dbReference type="UCSC" id="uc002adu.5">
    <molecule id="Q6N043-1"/>
    <property type="organism name" value="human"/>
</dbReference>
<dbReference type="AGR" id="HGNC:25953"/>
<dbReference type="CTD" id="54816"/>
<dbReference type="DisGeNET" id="54816"/>
<dbReference type="GeneCards" id="ZNF280D"/>
<dbReference type="HGNC" id="HGNC:25953">
    <property type="gene designation" value="ZNF280D"/>
</dbReference>
<dbReference type="HPA" id="ENSG00000137871">
    <property type="expression patterns" value="Low tissue specificity"/>
</dbReference>
<dbReference type="neXtProt" id="NX_Q6N043"/>
<dbReference type="OpenTargets" id="ENSG00000137871"/>
<dbReference type="PharmGKB" id="PA162410004"/>
<dbReference type="VEuPathDB" id="HostDB:ENSG00000137871"/>
<dbReference type="eggNOG" id="KOG1721">
    <property type="taxonomic scope" value="Eukaryota"/>
</dbReference>
<dbReference type="GeneTree" id="ENSGT00940000158889"/>
<dbReference type="HOGENOM" id="CLU_010097_2_0_1"/>
<dbReference type="InParanoid" id="Q6N043"/>
<dbReference type="OMA" id="GDLMSKH"/>
<dbReference type="OrthoDB" id="10032537at2759"/>
<dbReference type="PAN-GO" id="Q6N043">
    <property type="GO annotations" value="3 GO annotations based on evolutionary models"/>
</dbReference>
<dbReference type="PhylomeDB" id="Q6N043"/>
<dbReference type="TreeFam" id="TF331707"/>
<dbReference type="PathwayCommons" id="Q6N043"/>
<dbReference type="SignaLink" id="Q6N043"/>
<dbReference type="BioGRID-ORCS" id="54816">
    <property type="hits" value="7 hits in 1181 CRISPR screens"/>
</dbReference>
<dbReference type="ChiTaRS" id="ZNF280D">
    <property type="organism name" value="human"/>
</dbReference>
<dbReference type="GeneWiki" id="SUHW4"/>
<dbReference type="GenomeRNAi" id="54816"/>
<dbReference type="Pharos" id="Q6N043">
    <property type="development level" value="Tdark"/>
</dbReference>
<dbReference type="PRO" id="PR:Q6N043"/>
<dbReference type="Proteomes" id="UP000005640">
    <property type="component" value="Chromosome 15"/>
</dbReference>
<dbReference type="RNAct" id="Q6N043">
    <property type="molecule type" value="protein"/>
</dbReference>
<dbReference type="Bgee" id="ENSG00000137871">
    <property type="expression patterns" value="Expressed in calcaneal tendon and 196 other cell types or tissues"/>
</dbReference>
<dbReference type="ExpressionAtlas" id="Q6N043">
    <property type="expression patterns" value="baseline and differential"/>
</dbReference>
<dbReference type="GO" id="GO:0005634">
    <property type="term" value="C:nucleus"/>
    <property type="evidence" value="ECO:0007669"/>
    <property type="project" value="UniProtKB-SubCell"/>
</dbReference>
<dbReference type="GO" id="GO:0000981">
    <property type="term" value="F:DNA-binding transcription factor activity, RNA polymerase II-specific"/>
    <property type="evidence" value="ECO:0000318"/>
    <property type="project" value="GO_Central"/>
</dbReference>
<dbReference type="GO" id="GO:0000978">
    <property type="term" value="F:RNA polymerase II cis-regulatory region sequence-specific DNA binding"/>
    <property type="evidence" value="ECO:0000318"/>
    <property type="project" value="GO_Central"/>
</dbReference>
<dbReference type="GO" id="GO:0008270">
    <property type="term" value="F:zinc ion binding"/>
    <property type="evidence" value="ECO:0007669"/>
    <property type="project" value="UniProtKB-KW"/>
</dbReference>
<dbReference type="GO" id="GO:0006355">
    <property type="term" value="P:regulation of DNA-templated transcription"/>
    <property type="evidence" value="ECO:0000318"/>
    <property type="project" value="GO_Central"/>
</dbReference>
<dbReference type="FunFam" id="3.30.160.60:FF:000298">
    <property type="entry name" value="zinc finger protein 280D isoform X1"/>
    <property type="match status" value="1"/>
</dbReference>
<dbReference type="Gene3D" id="3.30.160.60">
    <property type="entry name" value="Classic Zinc Finger"/>
    <property type="match status" value="1"/>
</dbReference>
<dbReference type="InterPro" id="IPR025243">
    <property type="entry name" value="DUF4195"/>
</dbReference>
<dbReference type="InterPro" id="IPR050527">
    <property type="entry name" value="Snail/Krueppel_Znf"/>
</dbReference>
<dbReference type="InterPro" id="IPR036236">
    <property type="entry name" value="Znf_C2H2_sf"/>
</dbReference>
<dbReference type="InterPro" id="IPR013087">
    <property type="entry name" value="Znf_C2H2_type"/>
</dbReference>
<dbReference type="PANTHER" id="PTHR24388">
    <property type="entry name" value="ZINC FINGER PROTEIN"/>
    <property type="match status" value="1"/>
</dbReference>
<dbReference type="PANTHER" id="PTHR24388:SF34">
    <property type="entry name" value="ZINC FINGER PROTEIN 280D"/>
    <property type="match status" value="1"/>
</dbReference>
<dbReference type="Pfam" id="PF13836">
    <property type="entry name" value="DUF4195"/>
    <property type="match status" value="1"/>
</dbReference>
<dbReference type="Pfam" id="PF25414">
    <property type="entry name" value="zf-C2H2_Z280C_D"/>
    <property type="match status" value="1"/>
</dbReference>
<dbReference type="Pfam" id="PF25429">
    <property type="entry name" value="zf-POGZ"/>
    <property type="match status" value="1"/>
</dbReference>
<dbReference type="SMART" id="SM00355">
    <property type="entry name" value="ZnF_C2H2"/>
    <property type="match status" value="9"/>
</dbReference>
<dbReference type="SUPFAM" id="SSF57667">
    <property type="entry name" value="beta-beta-alpha zinc fingers"/>
    <property type="match status" value="1"/>
</dbReference>
<dbReference type="PROSITE" id="PS00028">
    <property type="entry name" value="ZINC_FINGER_C2H2_1"/>
    <property type="match status" value="5"/>
</dbReference>
<dbReference type="PROSITE" id="PS50157">
    <property type="entry name" value="ZINC_FINGER_C2H2_2"/>
    <property type="match status" value="2"/>
</dbReference>
<name>Z280D_HUMAN</name>
<comment type="function">
    <text>May function as a transcription factor.</text>
</comment>
<comment type="interaction">
    <interactant intactId="EBI-12027202">
        <id>Q6N043-2</id>
    </interactant>
    <interactant intactId="EBI-78176">
        <id>Q13185</id>
        <label>CBX3</label>
    </interactant>
    <organismsDiffer>false</organismsDiffer>
    <experiments>3</experiments>
</comment>
<comment type="interaction">
    <interactant intactId="EBI-12027202">
        <id>Q6N043-2</id>
    </interactant>
    <interactant intactId="EBI-78219">
        <id>P45973</id>
        <label>CBX5</label>
    </interactant>
    <organismsDiffer>false</organismsDiffer>
    <experiments>3</experiments>
</comment>
<comment type="subcellular location">
    <subcellularLocation>
        <location evidence="13">Nucleus</location>
    </subcellularLocation>
</comment>
<comment type="alternative products">
    <event type="alternative splicing"/>
    <isoform>
        <id>Q6N043-1</id>
        <name>1</name>
        <sequence type="displayed"/>
    </isoform>
    <isoform>
        <id>Q6N043-2</id>
        <name>2</name>
        <sequence type="described" ref="VSP_017624"/>
    </isoform>
    <isoform>
        <id>Q6N043-3</id>
        <name>3</name>
        <sequence type="described" ref="VSP_017625 VSP_017626"/>
    </isoform>
    <isoform>
        <id>Q6N043-4</id>
        <name>4</name>
        <sequence type="described" ref="VSP_017623 VSP_017627 VSP_017628"/>
    </isoform>
    <isoform>
        <id>Q6N043-5</id>
        <name>5</name>
        <sequence type="described" ref="VSP_017622"/>
    </isoform>
    <isoform>
        <id>Q6N043-6</id>
        <name>6</name>
        <sequence type="described" ref="VSP_054317 VSP_054318"/>
    </isoform>
</comment>
<comment type="sequence caution" evidence="13">
    <conflict type="erroneous initiation">
        <sequence resource="EMBL-CDS" id="BAB13410"/>
    </conflict>
    <text>Extended N-terminus.</text>
</comment>
<comment type="sequence caution" evidence="13">
    <conflict type="erroneous initiation">
        <sequence resource="EMBL-CDS" id="CAE46003"/>
    </conflict>
    <text>Extended N-terminus.</text>
</comment>
<protein>
    <recommendedName>
        <fullName>Zinc finger protein 280D</fullName>
    </recommendedName>
    <alternativeName>
        <fullName>Suppressor of hairy wing homolog 4</fullName>
    </alternativeName>
    <alternativeName>
        <fullName>Zinc finger protein 634</fullName>
    </alternativeName>
</protein>
<organism>
    <name type="scientific">Homo sapiens</name>
    <name type="common">Human</name>
    <dbReference type="NCBI Taxonomy" id="9606"/>
    <lineage>
        <taxon>Eukaryota</taxon>
        <taxon>Metazoa</taxon>
        <taxon>Chordata</taxon>
        <taxon>Craniata</taxon>
        <taxon>Vertebrata</taxon>
        <taxon>Euteleostomi</taxon>
        <taxon>Mammalia</taxon>
        <taxon>Eutheria</taxon>
        <taxon>Euarchontoglires</taxon>
        <taxon>Primates</taxon>
        <taxon>Haplorrhini</taxon>
        <taxon>Catarrhini</taxon>
        <taxon>Hominidae</taxon>
        <taxon>Homo</taxon>
    </lineage>
</organism>
<reference key="1">
    <citation type="journal article" date="2000" name="DNA Res.">
        <title>Prediction of the coding sequences of unidentified human genes. XVIII. The complete sequences of 100 new cDNA clones from brain which code for large proteins in vitro.</title>
        <authorList>
            <person name="Nagase T."/>
            <person name="Kikuno R."/>
            <person name="Nakayama M."/>
            <person name="Hirosawa M."/>
            <person name="Ohara O."/>
        </authorList>
    </citation>
    <scope>NUCLEOTIDE SEQUENCE [LARGE SCALE MRNA] (ISOFORM 2)</scope>
    <scope>VARIANT ILE-568</scope>
    <source>
        <tissue>Brain</tissue>
    </source>
</reference>
<reference key="2">
    <citation type="journal article" date="2001" name="Genome Res.">
        <title>Towards a catalog of human genes and proteins: sequencing and analysis of 500 novel complete protein coding human cDNAs.</title>
        <authorList>
            <person name="Wiemann S."/>
            <person name="Weil B."/>
            <person name="Wellenreuther R."/>
            <person name="Gassenhuber J."/>
            <person name="Glassl S."/>
            <person name="Ansorge W."/>
            <person name="Boecher M."/>
            <person name="Bloecker H."/>
            <person name="Bauersachs S."/>
            <person name="Blum H."/>
            <person name="Lauber J."/>
            <person name="Duesterhoeft A."/>
            <person name="Beyer A."/>
            <person name="Koehrer K."/>
            <person name="Strack N."/>
            <person name="Mewes H.-W."/>
            <person name="Ottenwaelder B."/>
            <person name="Obermaier B."/>
            <person name="Tampe J."/>
            <person name="Heubner D."/>
            <person name="Wambutt R."/>
            <person name="Korn B."/>
            <person name="Klein M."/>
            <person name="Poustka A."/>
        </authorList>
    </citation>
    <scope>NUCLEOTIDE SEQUENCE [LARGE SCALE MRNA] (ISOFORM 5)</scope>
    <source>
        <tissue>Brain</tissue>
    </source>
</reference>
<reference key="3">
    <citation type="journal article" date="2004" name="Nat. Genet.">
        <title>Complete sequencing and characterization of 21,243 full-length human cDNAs.</title>
        <authorList>
            <person name="Ota T."/>
            <person name="Suzuki Y."/>
            <person name="Nishikawa T."/>
            <person name="Otsuki T."/>
            <person name="Sugiyama T."/>
            <person name="Irie R."/>
            <person name="Wakamatsu A."/>
            <person name="Hayashi K."/>
            <person name="Sato H."/>
            <person name="Nagai K."/>
            <person name="Kimura K."/>
            <person name="Makita H."/>
            <person name="Sekine M."/>
            <person name="Obayashi M."/>
            <person name="Nishi T."/>
            <person name="Shibahara T."/>
            <person name="Tanaka T."/>
            <person name="Ishii S."/>
            <person name="Yamamoto J."/>
            <person name="Saito K."/>
            <person name="Kawai Y."/>
            <person name="Isono Y."/>
            <person name="Nakamura Y."/>
            <person name="Nagahari K."/>
            <person name="Murakami K."/>
            <person name="Yasuda T."/>
            <person name="Iwayanagi T."/>
            <person name="Wagatsuma M."/>
            <person name="Shiratori A."/>
            <person name="Sudo H."/>
            <person name="Hosoiri T."/>
            <person name="Kaku Y."/>
            <person name="Kodaira H."/>
            <person name="Kondo H."/>
            <person name="Sugawara M."/>
            <person name="Takahashi M."/>
            <person name="Kanda K."/>
            <person name="Yokoi T."/>
            <person name="Furuya T."/>
            <person name="Kikkawa E."/>
            <person name="Omura Y."/>
            <person name="Abe K."/>
            <person name="Kamihara K."/>
            <person name="Katsuta N."/>
            <person name="Sato K."/>
            <person name="Tanikawa M."/>
            <person name="Yamazaki M."/>
            <person name="Ninomiya K."/>
            <person name="Ishibashi T."/>
            <person name="Yamashita H."/>
            <person name="Murakawa K."/>
            <person name="Fujimori K."/>
            <person name="Tanai H."/>
            <person name="Kimata M."/>
            <person name="Watanabe M."/>
            <person name="Hiraoka S."/>
            <person name="Chiba Y."/>
            <person name="Ishida S."/>
            <person name="Ono Y."/>
            <person name="Takiguchi S."/>
            <person name="Watanabe S."/>
            <person name="Yosida M."/>
            <person name="Hotuta T."/>
            <person name="Kusano J."/>
            <person name="Kanehori K."/>
            <person name="Takahashi-Fujii A."/>
            <person name="Hara H."/>
            <person name="Tanase T.-O."/>
            <person name="Nomura Y."/>
            <person name="Togiya S."/>
            <person name="Komai F."/>
            <person name="Hara R."/>
            <person name="Takeuchi K."/>
            <person name="Arita M."/>
            <person name="Imose N."/>
            <person name="Musashino K."/>
            <person name="Yuuki H."/>
            <person name="Oshima A."/>
            <person name="Sasaki N."/>
            <person name="Aotsuka S."/>
            <person name="Yoshikawa Y."/>
            <person name="Matsunawa H."/>
            <person name="Ichihara T."/>
            <person name="Shiohata N."/>
            <person name="Sano S."/>
            <person name="Moriya S."/>
            <person name="Momiyama H."/>
            <person name="Satoh N."/>
            <person name="Takami S."/>
            <person name="Terashima Y."/>
            <person name="Suzuki O."/>
            <person name="Nakagawa S."/>
            <person name="Senoh A."/>
            <person name="Mizoguchi H."/>
            <person name="Goto Y."/>
            <person name="Shimizu F."/>
            <person name="Wakebe H."/>
            <person name="Hishigaki H."/>
            <person name="Watanabe T."/>
            <person name="Sugiyama A."/>
            <person name="Takemoto M."/>
            <person name="Kawakami B."/>
            <person name="Yamazaki M."/>
            <person name="Watanabe K."/>
            <person name="Kumagai A."/>
            <person name="Itakura S."/>
            <person name="Fukuzumi Y."/>
            <person name="Fujimori Y."/>
            <person name="Komiyama M."/>
            <person name="Tashiro H."/>
            <person name="Tanigami A."/>
            <person name="Fujiwara T."/>
            <person name="Ono T."/>
            <person name="Yamada K."/>
            <person name="Fujii Y."/>
            <person name="Ozaki K."/>
            <person name="Hirao M."/>
            <person name="Ohmori Y."/>
            <person name="Kawabata A."/>
            <person name="Hikiji T."/>
            <person name="Kobatake N."/>
            <person name="Inagaki H."/>
            <person name="Ikema Y."/>
            <person name="Okamoto S."/>
            <person name="Okitani R."/>
            <person name="Kawakami T."/>
            <person name="Noguchi S."/>
            <person name="Itoh T."/>
            <person name="Shigeta K."/>
            <person name="Senba T."/>
            <person name="Matsumura K."/>
            <person name="Nakajima Y."/>
            <person name="Mizuno T."/>
            <person name="Morinaga M."/>
            <person name="Sasaki M."/>
            <person name="Togashi T."/>
            <person name="Oyama M."/>
            <person name="Hata H."/>
            <person name="Watanabe M."/>
            <person name="Komatsu T."/>
            <person name="Mizushima-Sugano J."/>
            <person name="Satoh T."/>
            <person name="Shirai Y."/>
            <person name="Takahashi Y."/>
            <person name="Nakagawa K."/>
            <person name="Okumura K."/>
            <person name="Nagase T."/>
            <person name="Nomura N."/>
            <person name="Kikuchi H."/>
            <person name="Masuho Y."/>
            <person name="Yamashita R."/>
            <person name="Nakai K."/>
            <person name="Yada T."/>
            <person name="Nakamura Y."/>
            <person name="Ohara O."/>
            <person name="Isogai T."/>
            <person name="Sugano S."/>
        </authorList>
    </citation>
    <scope>NUCLEOTIDE SEQUENCE [LARGE SCALE MRNA] (ISOFORM 4)</scope>
    <scope>VARIANT ILE-568</scope>
    <source>
        <tissue>Colon</tissue>
    </source>
</reference>
<reference key="4">
    <citation type="journal article" date="2007" name="BMC Genomics">
        <title>The full-ORF clone resource of the German cDNA consortium.</title>
        <authorList>
            <person name="Bechtel S."/>
            <person name="Rosenfelder H."/>
            <person name="Duda A."/>
            <person name="Schmidt C.P."/>
            <person name="Ernst U."/>
            <person name="Wellenreuther R."/>
            <person name="Mehrle A."/>
            <person name="Schuster C."/>
            <person name="Bahr A."/>
            <person name="Bloecker H."/>
            <person name="Heubner D."/>
            <person name="Hoerlein A."/>
            <person name="Michel G."/>
            <person name="Wedler H."/>
            <person name="Koehrer K."/>
            <person name="Ottenwaelder B."/>
            <person name="Poustka A."/>
            <person name="Wiemann S."/>
            <person name="Schupp I."/>
        </authorList>
    </citation>
    <scope>NUCLEOTIDE SEQUENCE [LARGE SCALE MRNA] (ISOFORMS 1; 2 AND 3)</scope>
    <scope>VARIANT ILE-568</scope>
    <source>
        <tissue>Colon endothelium</tissue>
        <tissue>Liver</tissue>
        <tissue>Uterine endothelium</tissue>
    </source>
</reference>
<reference key="5">
    <citation type="journal article" date="2006" name="Nature">
        <title>Analysis of the DNA sequence and duplication history of human chromosome 15.</title>
        <authorList>
            <person name="Zody M.C."/>
            <person name="Garber M."/>
            <person name="Sharpe T."/>
            <person name="Young S.K."/>
            <person name="Rowen L."/>
            <person name="O'Neill K."/>
            <person name="Whittaker C.A."/>
            <person name="Kamal M."/>
            <person name="Chang J.L."/>
            <person name="Cuomo C.A."/>
            <person name="Dewar K."/>
            <person name="FitzGerald M.G."/>
            <person name="Kodira C.D."/>
            <person name="Madan A."/>
            <person name="Qin S."/>
            <person name="Yang X."/>
            <person name="Abbasi N."/>
            <person name="Abouelleil A."/>
            <person name="Arachchi H.M."/>
            <person name="Baradarani L."/>
            <person name="Birditt B."/>
            <person name="Bloom S."/>
            <person name="Bloom T."/>
            <person name="Borowsky M.L."/>
            <person name="Burke J."/>
            <person name="Butler J."/>
            <person name="Cook A."/>
            <person name="DeArellano K."/>
            <person name="DeCaprio D."/>
            <person name="Dorris L. III"/>
            <person name="Dors M."/>
            <person name="Eichler E.E."/>
            <person name="Engels R."/>
            <person name="Fahey J."/>
            <person name="Fleetwood P."/>
            <person name="Friedman C."/>
            <person name="Gearin G."/>
            <person name="Hall J.L."/>
            <person name="Hensley G."/>
            <person name="Johnson E."/>
            <person name="Jones C."/>
            <person name="Kamat A."/>
            <person name="Kaur A."/>
            <person name="Locke D.P."/>
            <person name="Madan A."/>
            <person name="Munson G."/>
            <person name="Jaffe D.B."/>
            <person name="Lui A."/>
            <person name="Macdonald P."/>
            <person name="Mauceli E."/>
            <person name="Naylor J.W."/>
            <person name="Nesbitt R."/>
            <person name="Nicol R."/>
            <person name="O'Leary S.B."/>
            <person name="Ratcliffe A."/>
            <person name="Rounsley S."/>
            <person name="She X."/>
            <person name="Sneddon K.M.B."/>
            <person name="Stewart S."/>
            <person name="Sougnez C."/>
            <person name="Stone S.M."/>
            <person name="Topham K."/>
            <person name="Vincent D."/>
            <person name="Wang S."/>
            <person name="Zimmer A.R."/>
            <person name="Birren B.W."/>
            <person name="Hood L."/>
            <person name="Lander E.S."/>
            <person name="Nusbaum C."/>
        </authorList>
    </citation>
    <scope>NUCLEOTIDE SEQUENCE [LARGE SCALE GENOMIC DNA]</scope>
</reference>
<reference key="6">
    <citation type="journal article" date="2004" name="Genome Res.">
        <title>The status, quality, and expansion of the NIH full-length cDNA project: the Mammalian Gene Collection (MGC).</title>
        <authorList>
            <consortium name="The MGC Project Team"/>
        </authorList>
    </citation>
    <scope>NUCLEOTIDE SEQUENCE [LARGE SCALE MRNA] (ISOFORMS 1 AND 6)</scope>
    <scope>VARIANT ILE-568</scope>
    <source>
        <tissue>Brain</tissue>
        <tissue>Liver</tissue>
        <tissue>Skin</tissue>
        <tissue>Uterus</tissue>
    </source>
</reference>
<reference key="7">
    <citation type="journal article" date="2008" name="J. Proteome Res.">
        <title>Combining protein-based IMAC, peptide-based IMAC, and MudPIT for efficient phosphoproteomic analysis.</title>
        <authorList>
            <person name="Cantin G.T."/>
            <person name="Yi W."/>
            <person name="Lu B."/>
            <person name="Park S.K."/>
            <person name="Xu T."/>
            <person name="Lee J.-D."/>
            <person name="Yates J.R. III"/>
        </authorList>
    </citation>
    <scope>PHOSPHORYLATION [LARGE SCALE ANALYSIS] AT SER-545</scope>
    <scope>IDENTIFICATION BY MASS SPECTROMETRY [LARGE SCALE ANALYSIS]</scope>
    <source>
        <tissue>Cervix carcinoma</tissue>
    </source>
</reference>
<reference key="8">
    <citation type="journal article" date="2008" name="Proc. Natl. Acad. Sci. U.S.A.">
        <title>A quantitative atlas of mitotic phosphorylation.</title>
        <authorList>
            <person name="Dephoure N."/>
            <person name="Zhou C."/>
            <person name="Villen J."/>
            <person name="Beausoleil S.A."/>
            <person name="Bakalarski C.E."/>
            <person name="Elledge S.J."/>
            <person name="Gygi S.P."/>
        </authorList>
    </citation>
    <scope>PHOSPHORYLATION [LARGE SCALE ANALYSIS] AT SER-545</scope>
    <scope>IDENTIFICATION BY MASS SPECTROMETRY [LARGE SCALE ANALYSIS]</scope>
    <source>
        <tissue>Cervix carcinoma</tissue>
    </source>
</reference>
<reference key="9">
    <citation type="journal article" date="2010" name="Sci. Signal.">
        <title>Quantitative phosphoproteomics reveals widespread full phosphorylation site occupancy during mitosis.</title>
        <authorList>
            <person name="Olsen J.V."/>
            <person name="Vermeulen M."/>
            <person name="Santamaria A."/>
            <person name="Kumar C."/>
            <person name="Miller M.L."/>
            <person name="Jensen L.J."/>
            <person name="Gnad F."/>
            <person name="Cox J."/>
            <person name="Jensen T.S."/>
            <person name="Nigg E.A."/>
            <person name="Brunak S."/>
            <person name="Mann M."/>
        </authorList>
    </citation>
    <scope>PHOSPHORYLATION [LARGE SCALE ANALYSIS] AT SER-104</scope>
    <scope>IDENTIFICATION BY MASS SPECTROMETRY [LARGE SCALE ANALYSIS]</scope>
    <source>
        <tissue>Cervix carcinoma</tissue>
    </source>
</reference>
<reference key="10">
    <citation type="journal article" date="2013" name="J. Proteome Res.">
        <title>Toward a comprehensive characterization of a human cancer cell phosphoproteome.</title>
        <authorList>
            <person name="Zhou H."/>
            <person name="Di Palma S."/>
            <person name="Preisinger C."/>
            <person name="Peng M."/>
            <person name="Polat A.N."/>
            <person name="Heck A.J."/>
            <person name="Mohammed S."/>
        </authorList>
    </citation>
    <scope>PHOSPHORYLATION [LARGE SCALE ANALYSIS] AT SER-545</scope>
    <scope>IDENTIFICATION BY MASS SPECTROMETRY [LARGE SCALE ANALYSIS]</scope>
    <source>
        <tissue>Erythroleukemia</tissue>
    </source>
</reference>
<reference key="11">
    <citation type="journal article" date="2014" name="Nat. Struct. Mol. Biol.">
        <title>Uncovering global SUMOylation signaling networks in a site-specific manner.</title>
        <authorList>
            <person name="Hendriks I.A."/>
            <person name="D'Souza R.C."/>
            <person name="Yang B."/>
            <person name="Verlaan-de Vries M."/>
            <person name="Mann M."/>
            <person name="Vertegaal A.C."/>
        </authorList>
    </citation>
    <scope>SUMOYLATION [LARGE SCALE ANALYSIS] AT LYS-34; LYS-74; LYS-126; LYS-210 AND LYS-292</scope>
    <scope>IDENTIFICATION BY MASS SPECTROMETRY [LARGE SCALE ANALYSIS]</scope>
</reference>
<reference key="12">
    <citation type="journal article" date="2015" name="Cell Rep.">
        <title>SUMO-2 orchestrates chromatin modifiers in response to DNA damage.</title>
        <authorList>
            <person name="Hendriks I.A."/>
            <person name="Treffers L.W."/>
            <person name="Verlaan-de Vries M."/>
            <person name="Olsen J.V."/>
            <person name="Vertegaal A.C."/>
        </authorList>
    </citation>
    <scope>SUMOYLATION [LARGE SCALE ANALYSIS] AT LYS-34; LYS-126 AND LYS-210</scope>
    <scope>IDENTIFICATION BY MASS SPECTROMETRY [LARGE SCALE ANALYSIS]</scope>
</reference>
<reference key="13">
    <citation type="journal article" date="2015" name="Mol. Cell. Proteomics">
        <title>System-wide analysis of SUMOylation dynamics in response to replication stress reveals novel small ubiquitin-like modified target proteins and acceptor lysines relevant for genome stability.</title>
        <authorList>
            <person name="Xiao Z."/>
            <person name="Chang J.G."/>
            <person name="Hendriks I.A."/>
            <person name="Sigurdsson J.O."/>
            <person name="Olsen J.V."/>
            <person name="Vertegaal A.C."/>
        </authorList>
    </citation>
    <scope>SUMOYLATION [LARGE SCALE ANALYSIS] AT LYS-740</scope>
    <scope>IDENTIFICATION BY MASS SPECTROMETRY [LARGE SCALE ANALYSIS]</scope>
</reference>
<reference key="14">
    <citation type="journal article" date="2017" name="Nat. Struct. Mol. Biol.">
        <title>Site-specific mapping of the human SUMO proteome reveals co-modification with phosphorylation.</title>
        <authorList>
            <person name="Hendriks I.A."/>
            <person name="Lyon D."/>
            <person name="Young C."/>
            <person name="Jensen L.J."/>
            <person name="Vertegaal A.C."/>
            <person name="Nielsen M.L."/>
        </authorList>
    </citation>
    <scope>SUMOYLATION [LARGE SCALE ANALYSIS] AT LYS-32; LYS-34; LYS-74; LYS-87; LYS-126; LYS-140; LYS-189; LYS-210; LYS-223; LYS-233; LYS-275; LYS-284; LYS-550; LYS-740 AND LYS-976</scope>
    <scope>IDENTIFICATION BY MASS SPECTROMETRY [LARGE SCALE ANALYSIS]</scope>
</reference>
<sequence length="979" mass="109285">MGDNPFQPKSNSKMAELFMECEEEELEPWQKKVKEVEDDDDDEPIFVGEISSSKPAISNILNRVNPSSYSRGLKNGALSRGITAAFKPTSQHYTNPTSNPVPASPINFHPESRSSDSSVIVQPFSKPGYITNSSRVVSNKSSELLFDLTQDTGLSHYQGGPTLSMAGMSESSFLSKRPSTSEVNNVNPKKPKPSESVSGANSSAVLPSVKSPSVTSSQAMLAKGTNTSSNQSKNGTPFPRACPKCNIHFNLLDPLKNHMKYCCPDMINNFLGLAKTEFSSTVNKNTTIDSEKGKLIMLVNDFYYGKHEGDVQEEQKTHTTFKCFSCLKILKNNIRFMNHMKHHLELEKQSSESWENHTTCQHCYRQFPTPFQLQCHIESTHTPHEFSTICKICELSFETEHVLLQHMKDNHKPGEMPYVCQVCNYRSSSFSDVETHFRTSHENTKNLLCPFCLKVIKIATPYMHHYMKHQKKGIHRCTKCRLQFLTCKEKMDHKTQHHRTFIKPKQLEGLPPGTKVTIRASVGPLQSGASPTPSISASASTLQLSPPRTKNITAKNPAKSNTSKPNTVKSNASKPNTSKPNGSKSKYKPKISNMQKKQSTLASSNKKSKVNTALRNLRYRRGIHKCIECCSEIKDFANHFPTYVHCSFCRYNTSCSKAYVNHMMSFHSNRPSKRFCIFKKHSENLRGITLVCLNCDFLSDVSGLDNMATHLSQHKTHTCQVVMQKVSVCIPTSEHLSELKKEAPAKEQEPVSKEIARPNMAERETETSNSESKQDKAASSKEKNGCNANSFEGSSTTKSEESITVSDKENETCLADQETGSKNIVSCDSNIGADKVEKKKQIQHVCQEMELKMCQSSENIILSDQIKDHNSSEARFSSKNIKDLRLASDNVSIDQFLRKRHEPESVSSDVSEQGSIHLEPLTPSEVLEYEATEILQKGSGDPSAKTDEVVSDQTDDIPGGNNPSTTEATVDLEDEKERS</sequence>
<proteinExistence type="evidence at protein level"/>
<gene>
    <name type="primary">ZNF280D</name>
    <name type="synonym">KIAA1584</name>
    <name type="synonym">SUHW4</name>
    <name type="synonym">ZNF634</name>
</gene>
<keyword id="KW-0025">Alternative splicing</keyword>
<keyword id="KW-0238">DNA-binding</keyword>
<keyword id="KW-1017">Isopeptide bond</keyword>
<keyword id="KW-0479">Metal-binding</keyword>
<keyword id="KW-0539">Nucleus</keyword>
<keyword id="KW-0597">Phosphoprotein</keyword>
<keyword id="KW-1267">Proteomics identification</keyword>
<keyword id="KW-1185">Reference proteome</keyword>
<keyword id="KW-0677">Repeat</keyword>
<keyword id="KW-0804">Transcription</keyword>
<keyword id="KW-0805">Transcription regulation</keyword>
<keyword id="KW-0832">Ubl conjugation</keyword>
<keyword id="KW-0862">Zinc</keyword>
<keyword id="KW-0863">Zinc-finger</keyword>
<evidence type="ECO:0000250" key="1">
    <source>
        <dbReference type="UniProtKB" id="Q68FE8"/>
    </source>
</evidence>
<evidence type="ECO:0000255" key="2">
    <source>
        <dbReference type="PROSITE-ProRule" id="PRU00042"/>
    </source>
</evidence>
<evidence type="ECO:0000256" key="3">
    <source>
        <dbReference type="SAM" id="MobiDB-lite"/>
    </source>
</evidence>
<evidence type="ECO:0000269" key="4">
    <source>
    </source>
</evidence>
<evidence type="ECO:0000269" key="5">
    <source>
    </source>
</evidence>
<evidence type="ECO:0000269" key="6">
    <source>
    </source>
</evidence>
<evidence type="ECO:0000269" key="7">
    <source>
    </source>
</evidence>
<evidence type="ECO:0000303" key="8">
    <source>
    </source>
</evidence>
<evidence type="ECO:0000303" key="9">
    <source>
    </source>
</evidence>
<evidence type="ECO:0000303" key="10">
    <source>
    </source>
</evidence>
<evidence type="ECO:0000303" key="11">
    <source>
    </source>
</evidence>
<evidence type="ECO:0000303" key="12">
    <source>
    </source>
</evidence>
<evidence type="ECO:0000305" key="13"/>
<evidence type="ECO:0007744" key="14">
    <source>
    </source>
</evidence>
<evidence type="ECO:0007744" key="15">
    <source>
    </source>
</evidence>
<evidence type="ECO:0007744" key="16">
    <source>
    </source>
</evidence>
<evidence type="ECO:0007744" key="17">
    <source>
    </source>
</evidence>
<evidence type="ECO:0007744" key="18">
    <source>
    </source>
</evidence>
<evidence type="ECO:0007744" key="19">
    <source>
    </source>
</evidence>
<evidence type="ECO:0007744" key="20">
    <source>
    </source>
</evidence>
<evidence type="ECO:0007744" key="21">
    <source>
    </source>
</evidence>
<feature type="chain" id="PRO_0000227977" description="Zinc finger protein 280D">
    <location>
        <begin position="1"/>
        <end position="979"/>
    </location>
</feature>
<feature type="zinc finger region" description="C2H2-type 1" evidence="2">
    <location>
        <begin position="321"/>
        <end position="343"/>
    </location>
</feature>
<feature type="zinc finger region" description="C2H2-type 2" evidence="2">
    <location>
        <begin position="358"/>
        <end position="381"/>
    </location>
</feature>
<feature type="zinc finger region" description="C2H2-type 3; degenerate" evidence="2">
    <location>
        <begin position="388"/>
        <end position="412"/>
    </location>
</feature>
<feature type="zinc finger region" description="C2H2-type 4" evidence="2">
    <location>
        <begin position="418"/>
        <end position="441"/>
    </location>
</feature>
<feature type="zinc finger region" description="C2H2-type 5" evidence="2">
    <location>
        <begin position="449"/>
        <end position="469"/>
    </location>
</feature>
<feature type="region of interest" description="Disordered" evidence="3">
    <location>
        <begin position="89"/>
        <end position="119"/>
    </location>
</feature>
<feature type="region of interest" description="Disordered" evidence="3">
    <location>
        <begin position="157"/>
        <end position="236"/>
    </location>
</feature>
<feature type="region of interest" description="Disordered" evidence="3">
    <location>
        <begin position="523"/>
        <end position="608"/>
    </location>
</feature>
<feature type="region of interest" description="Disordered" evidence="3">
    <location>
        <begin position="739"/>
        <end position="809"/>
    </location>
</feature>
<feature type="region of interest" description="Disordered" evidence="3">
    <location>
        <begin position="896"/>
        <end position="979"/>
    </location>
</feature>
<feature type="compositionally biased region" description="Polar residues" evidence="3">
    <location>
        <begin position="89"/>
        <end position="101"/>
    </location>
</feature>
<feature type="compositionally biased region" description="Polar residues" evidence="3">
    <location>
        <begin position="169"/>
        <end position="187"/>
    </location>
</feature>
<feature type="compositionally biased region" description="Polar residues" evidence="3">
    <location>
        <begin position="195"/>
        <end position="235"/>
    </location>
</feature>
<feature type="compositionally biased region" description="Low complexity" evidence="3">
    <location>
        <begin position="527"/>
        <end position="541"/>
    </location>
</feature>
<feature type="compositionally biased region" description="Polar residues" evidence="3">
    <location>
        <begin position="542"/>
        <end position="584"/>
    </location>
</feature>
<feature type="compositionally biased region" description="Polar residues" evidence="3">
    <location>
        <begin position="592"/>
        <end position="608"/>
    </location>
</feature>
<feature type="compositionally biased region" description="Basic and acidic residues" evidence="3">
    <location>
        <begin position="739"/>
        <end position="784"/>
    </location>
</feature>
<feature type="compositionally biased region" description="Polar residues" evidence="3">
    <location>
        <begin position="786"/>
        <end position="797"/>
    </location>
</feature>
<feature type="compositionally biased region" description="Basic and acidic residues" evidence="3">
    <location>
        <begin position="798"/>
        <end position="809"/>
    </location>
</feature>
<feature type="compositionally biased region" description="Polar residues" evidence="3">
    <location>
        <begin position="905"/>
        <end position="914"/>
    </location>
</feature>
<feature type="compositionally biased region" description="Acidic residues" evidence="3">
    <location>
        <begin position="970"/>
        <end position="979"/>
    </location>
</feature>
<feature type="modified residue" description="Phosphoserine" evidence="16">
    <location>
        <position position="104"/>
    </location>
</feature>
<feature type="modified residue" description="Phosphoserine" evidence="14 15 17">
    <location>
        <position position="545"/>
    </location>
</feature>
<feature type="modified residue" description="Phosphoserine" evidence="1">
    <location>
        <position position="908"/>
    </location>
</feature>
<feature type="modified residue" description="Phosphoserine" evidence="1">
    <location>
        <position position="911"/>
    </location>
</feature>
<feature type="cross-link" description="Glycyl lysine isopeptide (Lys-Gly) (interchain with G-Cter in SUMO2)" evidence="21">
    <location>
        <position position="32"/>
    </location>
</feature>
<feature type="cross-link" description="Glycyl lysine isopeptide (Lys-Gly) (interchain with G-Cter in SUMO2)" evidence="18 20 21">
    <location>
        <position position="34"/>
    </location>
</feature>
<feature type="cross-link" description="Glycyl lysine isopeptide (Lys-Gly) (interchain with G-Cter in SUMO2)" evidence="18 21">
    <location>
        <position position="74"/>
    </location>
</feature>
<feature type="cross-link" description="Glycyl lysine isopeptide (Lys-Gly) (interchain with G-Cter in SUMO2)" evidence="21">
    <location>
        <position position="87"/>
    </location>
</feature>
<feature type="cross-link" description="Glycyl lysine isopeptide (Lys-Gly) (interchain with G-Cter in SUMO2)" evidence="18 20 21">
    <location>
        <position position="126"/>
    </location>
</feature>
<feature type="cross-link" description="Glycyl lysine isopeptide (Lys-Gly) (interchain with G-Cter in SUMO2)" evidence="21">
    <location>
        <position position="140"/>
    </location>
</feature>
<feature type="cross-link" description="Glycyl lysine isopeptide (Lys-Gly) (interchain with G-Cter in SUMO2)" evidence="21">
    <location>
        <position position="189"/>
    </location>
</feature>
<feature type="cross-link" description="Glycyl lysine isopeptide (Lys-Gly) (interchain with G-Cter in SUMO2)" evidence="18 20 21">
    <location>
        <position position="210"/>
    </location>
</feature>
<feature type="cross-link" description="Glycyl lysine isopeptide (Lys-Gly) (interchain with G-Cter in SUMO2)" evidence="21">
    <location>
        <position position="223"/>
    </location>
</feature>
<feature type="cross-link" description="Glycyl lysine isopeptide (Lys-Gly) (interchain with G-Cter in SUMO2)" evidence="21">
    <location>
        <position position="233"/>
    </location>
</feature>
<feature type="cross-link" description="Glycyl lysine isopeptide (Lys-Gly) (interchain with G-Cter in SUMO2)" evidence="21">
    <location>
        <position position="275"/>
    </location>
</feature>
<feature type="cross-link" description="Glycyl lysine isopeptide (Lys-Gly) (interchain with G-Cter in SUMO2)" evidence="21">
    <location>
        <position position="284"/>
    </location>
</feature>
<feature type="cross-link" description="Glycyl lysine isopeptide (Lys-Gly) (interchain with G-Cter in SUMO2)" evidence="18">
    <location>
        <position position="292"/>
    </location>
</feature>
<feature type="cross-link" description="Glycyl lysine isopeptide (Lys-Gly) (interchain with G-Cter in SUMO2)" evidence="21">
    <location>
        <position position="550"/>
    </location>
</feature>
<feature type="cross-link" description="Glycyl lysine isopeptide (Lys-Gly) (interchain with G-Cter in SUMO2)" evidence="19 21">
    <location>
        <position position="740"/>
    </location>
</feature>
<feature type="cross-link" description="Glycyl lysine isopeptide (Lys-Gly) (interchain with G-Cter in SUMO2)" evidence="21">
    <location>
        <position position="976"/>
    </location>
</feature>
<feature type="splice variant" id="VSP_017622" description="In isoform 5." evidence="9">
    <location>
        <begin position="1"/>
        <end position="759"/>
    </location>
</feature>
<feature type="splice variant" id="VSP_017623" description="In isoform 4." evidence="10">
    <location>
        <begin position="1"/>
        <end position="296"/>
    </location>
</feature>
<feature type="splice variant" id="VSP_017624" description="In isoform 2." evidence="8 12">
    <location>
        <begin position="1"/>
        <end position="13"/>
    </location>
</feature>
<feature type="splice variant" id="VSP_054317" description="In isoform 6." evidence="11">
    <original>GYITNSSRVVSNKSSELLFDLTQDTGLSHYQ</original>
    <variation>VSVSKTIRPAQGSIGCCLSISTVPSYNSGLS</variation>
    <location>
        <begin position="128"/>
        <end position="158"/>
    </location>
</feature>
<feature type="splice variant" id="VSP_054318" description="In isoform 6." evidence="11">
    <location>
        <begin position="159"/>
        <end position="979"/>
    </location>
</feature>
<feature type="splice variant" id="VSP_017625" description="In isoform 3." evidence="12">
    <original>KPNGSKSKYKPKIS</original>
    <variation>IVGAFTNALSVVPK</variation>
    <location>
        <begin position="579"/>
        <end position="592"/>
    </location>
</feature>
<feature type="splice variant" id="VSP_017626" description="In isoform 3." evidence="12">
    <location>
        <begin position="593"/>
        <end position="979"/>
    </location>
</feature>
<feature type="splice variant" id="VSP_017627" description="In isoform 4." evidence="10">
    <original>GITLVCLNCDFLSDVSGLDNMATHLSQHKTH</original>
    <variation>CVGGQIECDLPKLHKLVVEPRLTLGLLTPNF</variation>
    <location>
        <begin position="687"/>
        <end position="717"/>
    </location>
</feature>
<feature type="splice variant" id="VSP_017628" description="In isoform 4." evidence="10">
    <location>
        <begin position="718"/>
        <end position="979"/>
    </location>
</feature>
<feature type="sequence variant" id="VAR_054314" description="In dbSNP:rs28620278." evidence="4 5 6 7">
    <original>V</original>
    <variation>I</variation>
    <location>
        <position position="568"/>
    </location>
</feature>
<feature type="sequence variant" id="VAR_054315" description="In dbSNP:rs12900993.">
    <original>A</original>
    <variation>V</variation>
    <location>
        <position position="778"/>
    </location>
</feature>
<feature type="sequence variant" id="VAR_054316" description="In dbSNP:rs12901843.">
    <original>K</original>
    <variation>I</variation>
    <location>
        <position position="781"/>
    </location>
</feature>
<feature type="sequence variant" id="VAR_054317" description="In dbSNP:rs12900729.">
    <original>G</original>
    <variation>A</variation>
    <location>
        <position position="785"/>
    </location>
</feature>
<feature type="sequence conflict" description="In Ref. 4; CAE46003." evidence="13" ref="4">
    <original>S</original>
    <variation>P</variation>
    <location>
        <position position="229"/>
    </location>
</feature>
<feature type="sequence conflict" description="In Ref. 4; CAE45785." evidence="13" ref="4">
    <original>L</original>
    <variation>W</variation>
    <location>
        <position position="252"/>
    </location>
</feature>
<feature type="sequence conflict" description="In Ref. 4; CAE45785." evidence="13" ref="4">
    <original>A</original>
    <variation>T</variation>
    <location>
        <position position="274"/>
    </location>
</feature>
<feature type="sequence conflict" description="In Ref. 3; BAA90940." evidence="13" ref="3">
    <original>L</original>
    <variation>P</variation>
    <location>
        <position position="544"/>
    </location>
</feature>
<feature type="sequence conflict" description="In Ref. 4; CAE45827." evidence="13" ref="4">
    <original>E</original>
    <variation>R</variation>
    <location>
        <position position="742"/>
    </location>
</feature>
<accession>Q6N043</accession>
<accession>A1L495</accession>
<accession>B2RMT6</accession>
<accession>Q6MZM6</accession>
<accession>Q6N085</accession>
<accession>Q6P2R6</accession>
<accession>Q7Z6J5</accession>
<accession>Q9H0U5</accession>
<accession>Q9HCI8</accession>
<accession>Q9NXS0</accession>